<reference key="1">
    <citation type="submission" date="2009-06" db="EMBL/GenBank/DDBJ databases">
        <title>Complete sequence of Desulfovibrio salexigens DSM 2638.</title>
        <authorList>
            <consortium name="US DOE Joint Genome Institute"/>
            <person name="Lucas S."/>
            <person name="Copeland A."/>
            <person name="Lapidus A."/>
            <person name="Glavina del Rio T."/>
            <person name="Tice H."/>
            <person name="Bruce D."/>
            <person name="Goodwin L."/>
            <person name="Pitluck S."/>
            <person name="Munk A.C."/>
            <person name="Brettin T."/>
            <person name="Detter J.C."/>
            <person name="Han C."/>
            <person name="Tapia R."/>
            <person name="Larimer F."/>
            <person name="Land M."/>
            <person name="Hauser L."/>
            <person name="Kyrpides N."/>
            <person name="Anderson I."/>
            <person name="Wall J.D."/>
            <person name="Arkin A.P."/>
            <person name="Dehal P."/>
            <person name="Chivian D."/>
            <person name="Giles B."/>
            <person name="Hazen T.C."/>
        </authorList>
    </citation>
    <scope>NUCLEOTIDE SEQUENCE [LARGE SCALE GENOMIC DNA]</scope>
    <source>
        <strain>ATCC 14822 / DSM 2638 / NCIMB 8403 / VKM B-1763</strain>
    </source>
</reference>
<comment type="function">
    <text evidence="1">Binds 23S rRNA and is also seen to make contacts with the A and possibly P site tRNAs.</text>
</comment>
<comment type="subunit">
    <text evidence="1">Part of the 50S ribosomal subunit.</text>
</comment>
<comment type="similarity">
    <text evidence="1">Belongs to the universal ribosomal protein uL16 family.</text>
</comment>
<name>RL16_MARSD</name>
<sequence>MLSPKKVKFRKRQKGRLKGKAQRGSSIAFGDIAIKTLEHGKLTNNQIEAARVAIMRHIKRGGQVWIRVFPDMPITAKPAEVRQGKGKGSPVGWVAPVKPGRILYEVKGVDIELAREALVRASHKLPVKTTIVVKEGL</sequence>
<accession>C6C192</accession>
<evidence type="ECO:0000255" key="1">
    <source>
        <dbReference type="HAMAP-Rule" id="MF_01342"/>
    </source>
</evidence>
<evidence type="ECO:0000256" key="2">
    <source>
        <dbReference type="SAM" id="MobiDB-lite"/>
    </source>
</evidence>
<evidence type="ECO:0000305" key="3"/>
<protein>
    <recommendedName>
        <fullName evidence="1">Large ribosomal subunit protein uL16</fullName>
    </recommendedName>
    <alternativeName>
        <fullName evidence="3">50S ribosomal protein L16</fullName>
    </alternativeName>
</protein>
<dbReference type="EMBL" id="CP001649">
    <property type="protein sequence ID" value="ACS79255.1"/>
    <property type="molecule type" value="Genomic_DNA"/>
</dbReference>
<dbReference type="RefSeq" id="WP_015851074.1">
    <property type="nucleotide sequence ID" value="NC_012881.1"/>
</dbReference>
<dbReference type="SMR" id="C6C192"/>
<dbReference type="STRING" id="526222.Desal_1192"/>
<dbReference type="KEGG" id="dsa:Desal_1192"/>
<dbReference type="eggNOG" id="COG0197">
    <property type="taxonomic scope" value="Bacteria"/>
</dbReference>
<dbReference type="HOGENOM" id="CLU_078858_2_1_7"/>
<dbReference type="OrthoDB" id="9802589at2"/>
<dbReference type="Proteomes" id="UP000002601">
    <property type="component" value="Chromosome"/>
</dbReference>
<dbReference type="GO" id="GO:0022625">
    <property type="term" value="C:cytosolic large ribosomal subunit"/>
    <property type="evidence" value="ECO:0007669"/>
    <property type="project" value="TreeGrafter"/>
</dbReference>
<dbReference type="GO" id="GO:0019843">
    <property type="term" value="F:rRNA binding"/>
    <property type="evidence" value="ECO:0007669"/>
    <property type="project" value="UniProtKB-UniRule"/>
</dbReference>
<dbReference type="GO" id="GO:0003735">
    <property type="term" value="F:structural constituent of ribosome"/>
    <property type="evidence" value="ECO:0007669"/>
    <property type="project" value="InterPro"/>
</dbReference>
<dbReference type="GO" id="GO:0000049">
    <property type="term" value="F:tRNA binding"/>
    <property type="evidence" value="ECO:0007669"/>
    <property type="project" value="UniProtKB-KW"/>
</dbReference>
<dbReference type="GO" id="GO:0006412">
    <property type="term" value="P:translation"/>
    <property type="evidence" value="ECO:0007669"/>
    <property type="project" value="UniProtKB-UniRule"/>
</dbReference>
<dbReference type="CDD" id="cd01433">
    <property type="entry name" value="Ribosomal_L16_L10e"/>
    <property type="match status" value="1"/>
</dbReference>
<dbReference type="FunFam" id="3.90.1170.10:FF:000001">
    <property type="entry name" value="50S ribosomal protein L16"/>
    <property type="match status" value="1"/>
</dbReference>
<dbReference type="Gene3D" id="3.90.1170.10">
    <property type="entry name" value="Ribosomal protein L10e/L16"/>
    <property type="match status" value="1"/>
</dbReference>
<dbReference type="HAMAP" id="MF_01342">
    <property type="entry name" value="Ribosomal_uL16"/>
    <property type="match status" value="1"/>
</dbReference>
<dbReference type="InterPro" id="IPR047873">
    <property type="entry name" value="Ribosomal_uL16"/>
</dbReference>
<dbReference type="InterPro" id="IPR000114">
    <property type="entry name" value="Ribosomal_uL16_bact-type"/>
</dbReference>
<dbReference type="InterPro" id="IPR020798">
    <property type="entry name" value="Ribosomal_uL16_CS"/>
</dbReference>
<dbReference type="InterPro" id="IPR016180">
    <property type="entry name" value="Ribosomal_uL16_dom"/>
</dbReference>
<dbReference type="InterPro" id="IPR036920">
    <property type="entry name" value="Ribosomal_uL16_sf"/>
</dbReference>
<dbReference type="NCBIfam" id="TIGR01164">
    <property type="entry name" value="rplP_bact"/>
    <property type="match status" value="1"/>
</dbReference>
<dbReference type="PANTHER" id="PTHR12220">
    <property type="entry name" value="50S/60S RIBOSOMAL PROTEIN L16"/>
    <property type="match status" value="1"/>
</dbReference>
<dbReference type="PANTHER" id="PTHR12220:SF13">
    <property type="entry name" value="LARGE RIBOSOMAL SUBUNIT PROTEIN UL16M"/>
    <property type="match status" value="1"/>
</dbReference>
<dbReference type="Pfam" id="PF00252">
    <property type="entry name" value="Ribosomal_L16"/>
    <property type="match status" value="1"/>
</dbReference>
<dbReference type="PRINTS" id="PR00060">
    <property type="entry name" value="RIBOSOMALL16"/>
</dbReference>
<dbReference type="SUPFAM" id="SSF54686">
    <property type="entry name" value="Ribosomal protein L16p/L10e"/>
    <property type="match status" value="1"/>
</dbReference>
<dbReference type="PROSITE" id="PS00586">
    <property type="entry name" value="RIBOSOMAL_L16_1"/>
    <property type="match status" value="1"/>
</dbReference>
<gene>
    <name evidence="1" type="primary">rplP</name>
    <name type="ordered locus">Desal_1192</name>
</gene>
<proteinExistence type="inferred from homology"/>
<keyword id="KW-1185">Reference proteome</keyword>
<keyword id="KW-0687">Ribonucleoprotein</keyword>
<keyword id="KW-0689">Ribosomal protein</keyword>
<keyword id="KW-0694">RNA-binding</keyword>
<keyword id="KW-0699">rRNA-binding</keyword>
<keyword id="KW-0820">tRNA-binding</keyword>
<feature type="chain" id="PRO_1000214725" description="Large ribosomal subunit protein uL16">
    <location>
        <begin position="1"/>
        <end position="137"/>
    </location>
</feature>
<feature type="region of interest" description="Disordered" evidence="2">
    <location>
        <begin position="1"/>
        <end position="22"/>
    </location>
</feature>
<feature type="compositionally biased region" description="Basic residues" evidence="2">
    <location>
        <begin position="1"/>
        <end position="21"/>
    </location>
</feature>
<organism>
    <name type="scientific">Maridesulfovibrio salexigens (strain ATCC 14822 / DSM 2638 / NCIMB 8403 / VKM B-1763)</name>
    <name type="common">Desulfovibrio salexigens</name>
    <dbReference type="NCBI Taxonomy" id="526222"/>
    <lineage>
        <taxon>Bacteria</taxon>
        <taxon>Pseudomonadati</taxon>
        <taxon>Thermodesulfobacteriota</taxon>
        <taxon>Desulfovibrionia</taxon>
        <taxon>Desulfovibrionales</taxon>
        <taxon>Desulfovibrionaceae</taxon>
        <taxon>Maridesulfovibrio</taxon>
    </lineage>
</organism>